<feature type="signal peptide" evidence="2">
    <location>
        <begin position="1"/>
        <end position="22"/>
    </location>
</feature>
<feature type="peptide" id="PRO_0000000279" description="Pleurocidin-like peptide WF4">
    <location>
        <begin position="23"/>
        <end position="47"/>
    </location>
</feature>
<feature type="propeptide" id="PRO_0000000280" evidence="1">
    <location>
        <begin position="48"/>
        <end position="68"/>
    </location>
</feature>
<feature type="turn" evidence="4">
    <location>
        <begin position="29"/>
        <end position="32"/>
    </location>
</feature>
<feature type="turn" evidence="4">
    <location>
        <begin position="35"/>
        <end position="41"/>
    </location>
</feature>
<feature type="strand" evidence="4">
    <location>
        <begin position="42"/>
        <end position="45"/>
    </location>
</feature>
<accession>Q90ZX8</accession>
<accession>Q90ZX9</accession>
<comment type="function">
    <text evidence="1">Antimicrobial peptide.</text>
</comment>
<comment type="subcellular location">
    <subcellularLocation>
        <location evidence="1">Secreted</location>
    </subcellularLocation>
</comment>
<comment type="similarity">
    <text evidence="3">Belongs to the pleurocidin family.</text>
</comment>
<name>PLE4_PSEAM</name>
<sequence length="68" mass="7732">MKFTATFLMMFIFVLMVEPGECGWGSIFKHGRHAAKHIGHAAVNHYLGEQQDLDKRAVDEDPNVIVFE</sequence>
<keyword id="KW-0002">3D-structure</keyword>
<keyword id="KW-0044">Antibiotic</keyword>
<keyword id="KW-0929">Antimicrobial</keyword>
<keyword id="KW-0964">Secreted</keyword>
<keyword id="KW-0732">Signal</keyword>
<organism>
    <name type="scientific">Pseudopleuronectes americanus</name>
    <name type="common">Winter flounder</name>
    <name type="synonym">Pleuronectes americanus</name>
    <dbReference type="NCBI Taxonomy" id="8265"/>
    <lineage>
        <taxon>Eukaryota</taxon>
        <taxon>Metazoa</taxon>
        <taxon>Chordata</taxon>
        <taxon>Craniata</taxon>
        <taxon>Vertebrata</taxon>
        <taxon>Euteleostomi</taxon>
        <taxon>Actinopterygii</taxon>
        <taxon>Neopterygii</taxon>
        <taxon>Teleostei</taxon>
        <taxon>Neoteleostei</taxon>
        <taxon>Acanthomorphata</taxon>
        <taxon>Carangaria</taxon>
        <taxon>Pleuronectiformes</taxon>
        <taxon>Pleuronectoidei</taxon>
        <taxon>Pleuronectidae</taxon>
        <taxon>Pseudopleuronectes</taxon>
    </lineage>
</organism>
<evidence type="ECO:0000250" key="1"/>
<evidence type="ECO:0000255" key="2"/>
<evidence type="ECO:0000305" key="3"/>
<evidence type="ECO:0007829" key="4">
    <source>
        <dbReference type="PDB" id="6RZC"/>
    </source>
</evidence>
<reference key="1">
    <citation type="journal article" date="2001" name="Dev. Comp. Immunol.">
        <title>Cloning and developmental expression of a family of pleurocidin-like antimicrobial peptides from winter flounder, Pleuronectes americanus (Walbaum).</title>
        <authorList>
            <person name="Douglas S.E."/>
            <person name="Gallant J.W."/>
            <person name="Gong Z."/>
            <person name="Hew C.-L."/>
        </authorList>
    </citation>
    <scope>NUCLEOTIDE SEQUENCE [GENOMIC DNA]</scope>
</reference>
<gene>
    <name type="primary">ple4</name>
</gene>
<dbReference type="EMBL" id="AF301514">
    <property type="protein sequence ID" value="AAK52849.1"/>
    <property type="molecule type" value="Genomic_DNA"/>
</dbReference>
<dbReference type="EMBL" id="AF301515">
    <property type="protein sequence ID" value="AAK52850.1"/>
    <property type="molecule type" value="Genomic_DNA"/>
</dbReference>
<dbReference type="PDB" id="6RZC">
    <property type="method" value="NMR"/>
    <property type="chains" value="A=23-47"/>
</dbReference>
<dbReference type="PDBsum" id="6RZC"/>
<dbReference type="SMR" id="Q90ZX8"/>
<dbReference type="GO" id="GO:0005576">
    <property type="term" value="C:extracellular region"/>
    <property type="evidence" value="ECO:0007669"/>
    <property type="project" value="UniProtKB-SubCell"/>
</dbReference>
<dbReference type="GO" id="GO:0042742">
    <property type="term" value="P:defense response to bacterium"/>
    <property type="evidence" value="ECO:0007669"/>
    <property type="project" value="UniProtKB-KW"/>
</dbReference>
<dbReference type="InterPro" id="IPR012515">
    <property type="entry name" value="Antimicrobial12"/>
</dbReference>
<dbReference type="Pfam" id="PF08107">
    <property type="entry name" value="Antimicrobial12"/>
    <property type="match status" value="1"/>
</dbReference>
<proteinExistence type="evidence at protein level"/>
<protein>
    <recommendedName>
        <fullName>Pleurocidin-like peptide WF4</fullName>
    </recommendedName>
</protein>